<protein>
    <recommendedName>
        <fullName>Circadian locomoter output cycles protein kaput</fullName>
        <ecNumber>2.3.1.48</ecNumber>
    </recommendedName>
</protein>
<organism>
    <name type="scientific">Spalax judaei</name>
    <name type="common">Judean Mountains blind mole rat</name>
    <name type="synonym">Nannospalax judaei</name>
    <dbReference type="NCBI Taxonomy" id="134510"/>
    <lineage>
        <taxon>Eukaryota</taxon>
        <taxon>Metazoa</taxon>
        <taxon>Chordata</taxon>
        <taxon>Craniata</taxon>
        <taxon>Vertebrata</taxon>
        <taxon>Euteleostomi</taxon>
        <taxon>Mammalia</taxon>
        <taxon>Eutheria</taxon>
        <taxon>Euarchontoglires</taxon>
        <taxon>Glires</taxon>
        <taxon>Rodentia</taxon>
        <taxon>Myomorpha</taxon>
        <taxon>Muroidea</taxon>
        <taxon>Spalacidae</taxon>
        <taxon>Spalacinae</taxon>
        <taxon>Nannospalax</taxon>
    </lineage>
</organism>
<feature type="chain" id="PRO_0000262641" description="Circadian locomoter output cycles protein kaput">
    <location>
        <begin position="1"/>
        <end position="865"/>
    </location>
</feature>
<feature type="domain" description="bHLH" evidence="5">
    <location>
        <begin position="34"/>
        <end position="84"/>
    </location>
</feature>
<feature type="domain" description="PAS 1" evidence="4">
    <location>
        <begin position="107"/>
        <end position="177"/>
    </location>
</feature>
<feature type="domain" description="PAS 2" evidence="4">
    <location>
        <begin position="262"/>
        <end position="332"/>
    </location>
</feature>
<feature type="domain" description="PAC">
    <location>
        <begin position="336"/>
        <end position="379"/>
    </location>
</feature>
<feature type="region of interest" description="Interaction with NR3C1" evidence="2">
    <location>
        <begin position="371"/>
        <end position="864"/>
    </location>
</feature>
<feature type="region of interest" description="Disordered" evidence="6">
    <location>
        <begin position="392"/>
        <end position="411"/>
    </location>
</feature>
<feature type="region of interest" description="Disordered" evidence="6">
    <location>
        <begin position="420"/>
        <end position="494"/>
    </location>
</feature>
<feature type="region of interest" description="Interaction with SIRT1" evidence="2">
    <location>
        <begin position="450"/>
        <end position="570"/>
    </location>
</feature>
<feature type="region of interest" description="Implicated in the circadian rhythmicity" evidence="1">
    <location>
        <begin position="514"/>
        <end position="564"/>
    </location>
</feature>
<feature type="region of interest" description="Disordered" evidence="6">
    <location>
        <begin position="620"/>
        <end position="653"/>
    </location>
</feature>
<feature type="region of interest" description="Disordered" evidence="6">
    <location>
        <begin position="755"/>
        <end position="803"/>
    </location>
</feature>
<feature type="region of interest" description="Disordered" evidence="6">
    <location>
        <begin position="822"/>
        <end position="865"/>
    </location>
</feature>
<feature type="short sequence motif" description="Nuclear localization signal" evidence="2">
    <location>
        <begin position="32"/>
        <end position="47"/>
    </location>
</feature>
<feature type="compositionally biased region" description="Polar residues" evidence="6">
    <location>
        <begin position="447"/>
        <end position="463"/>
    </location>
</feature>
<feature type="compositionally biased region" description="Low complexity" evidence="6">
    <location>
        <begin position="478"/>
        <end position="493"/>
    </location>
</feature>
<feature type="compositionally biased region" description="Low complexity" evidence="6">
    <location>
        <begin position="755"/>
        <end position="796"/>
    </location>
</feature>
<feature type="compositionally biased region" description="Low complexity" evidence="6">
    <location>
        <begin position="828"/>
        <end position="847"/>
    </location>
</feature>
<feature type="compositionally biased region" description="Polar residues" evidence="6">
    <location>
        <begin position="856"/>
        <end position="865"/>
    </location>
</feature>
<feature type="site" description="Interaction with E-box DNA" evidence="3">
    <location>
        <position position="39"/>
    </location>
</feature>
<feature type="site" description="Interaction with E-box DNA" evidence="3">
    <location>
        <position position="43"/>
    </location>
</feature>
<feature type="site" description="Interaction with E-box DNA" evidence="3">
    <location>
        <position position="47"/>
    </location>
</feature>
<feature type="site" description="Important for interaction with BMAL1" evidence="3">
    <location>
        <position position="84"/>
    </location>
</feature>
<feature type="modified residue" description="Phosphoserine" evidence="2">
    <location>
        <position position="38"/>
    </location>
</feature>
<feature type="modified residue" description="Phosphoserine" evidence="2">
    <location>
        <position position="42"/>
    </location>
</feature>
<feature type="modified residue" description="Phosphoserine" evidence="2">
    <location>
        <position position="408"/>
    </location>
</feature>
<feature type="modified residue" description="Phosphoserine; by GSK3-beta" evidence="2">
    <location>
        <position position="427"/>
    </location>
</feature>
<feature type="modified residue" description="Phosphoserine" evidence="2">
    <location>
        <position position="431"/>
    </location>
</feature>
<feature type="modified residue" description="Phosphothreonine; by CDK5" evidence="3">
    <location>
        <position position="451"/>
    </location>
</feature>
<feature type="modified residue" description="Phosphothreonine; by CDK5" evidence="3">
    <location>
        <position position="461"/>
    </location>
</feature>
<feature type="cross-link" description="Glycyl lysine isopeptide (Lys-Gly) (interchain with G-Cter in SUMO1)" evidence="2">
    <location>
        <position position="861"/>
    </location>
</feature>
<gene>
    <name type="primary">Clock</name>
</gene>
<name>CLOCK_SPAJD</name>
<proteinExistence type="evidence at transcript level"/>
<comment type="function">
    <text evidence="2 3">Transcriptional activator which forms a core component of the circadian clock. The circadian clock, an internal time-keeping system, regulates various physiological processes through the generation of approximately 24 hour circadian rhythms in gene expression, which are translated into rhythms in metabolism and behavior. It is derived from the Latin roots 'circa' (about) and 'diem' (day) and acts as an important regulator of a wide array of physiological functions including metabolism, sleep, body temperature, blood pressure, endocrine, immune, cardiovascular, and renal function. Consists of two major components: the central clock, residing in the suprachiasmatic nucleus (SCN) of the brain, and the peripheral clocks that are present in nearly every tissue and organ system. Both the central and peripheral clocks can be reset by environmental cues, also known as Zeitgebers (German for 'timegivers'). The predominant Zeitgeber for the central clock is light, which is sensed by retina and signals directly to the SCN. The central clock entrains the peripheral clocks through neuronal and hormonal signals, body temperature and feeding-related cues, aligning all clocks with the external light/dark cycle. Circadian rhythms allow an organism to achieve temporal homeostasis with its environment at the molecular level by regulating gene expression to create a peak of protein expression once every 24 hours to control when a particular physiological process is most active with respect to the solar day. Transcription and translation of core clock components (CLOCK, NPAS2, BMAL1, BMAL2, PER1, PER2, PER3, CRY1 and CRY2) plays a critical role in rhythm generation, whereas delays imposed by post-translational modifications (PTMs) are important for determining the period (tau) of the rhythms (tau refers to the period of a rhythm and is the length, in time, of one complete cycle). A diurnal rhythm is synchronized with the day/night cycle, while the ultradian and infradian rhythms have a period shorter and longer than 24 hours, respectively. Disruptions in the circadian rhythms contribute to the pathology of cardiovascular diseases, cancer, metabolic syndromes and aging. A transcription/translation feedback loop (TTFL) forms the core of the molecular circadian clock mechanism. Transcription factors, CLOCK or NPAS2 and BMAL1 or BMAL2, form the positive limb of the feedback loop, act in the form of a heterodimer and activate the transcription of core clock genes and clock-controlled genes (involved in key metabolic processes), harboring E-box elements (5'-CACGTG-3') within their promoters. The core clock genes: PER1/2/3 and CRY1/2 which are transcriptional repressors form the negative limb of the feedback loop and interact with the CLOCK|NPAS2-BMAL1|BMAL2 heterodimer inhibiting its activity and thereby negatively regulating their own expression. This heterodimer also activates nuclear receptors NR1D1/2 and RORA/B/G, which form a second feedback loop and which activate and repress BMAL1 transcription, respectively. Regulates the circadian expression of ICAM1, VCAM1, CCL2, THPO and MPL and also acts as an enhancer of the transactivation potential of NF-kappaB. Plays an important role in the homeostatic regulation of sleep. The CLOCK-BMAL1 heterodimer regulates the circadian expression of SERPINE1/PAI1, VWF, B3, CCRN4L/NOC, NAMPT, DBP, MYOD1, PPARGC1A, PPARGC1B, SIRT1, GYS2, F7, NGFR, GNRHR, BHLHE40/DEC1, ATF4, MTA1, KLF10 and also genes implicated in glucose and lipid metabolism. Promotes rhythmic chromatin opening, regulating the DNA accessibility of other transcription factors. The CLOCK-BMAL2 heterodimer activates the transcription of SERPINE1/PAI1 and BHLHE40/DEC1. The preferred binding motif for the CLOCK-BMAL1 heterodimer is 5'-CACGTGA-3', which contains a flanking adenine nucleotide at the 3-prime end of the canonical 6-nucleotide E-box sequence. CLOCK specifically binds to the half-site 5'-CAC-3', while BMAL1 binds to the half-site 5'-GTGA-3'. The CLOCK-BMAL1 heterodimer also recognizes the non-canonical E-box motifs 5'-AACGTGA-3' and 5'-CATGTGA-3'. CLOCK has an intrinsic acetyltransferase activity, which enables circadian chromatin remodeling by acetylating histones and nonhistone proteins, including its own partner BMAL1. Represses glucocorticoid receptor NR3C1/GR-induced transcriptional activity by reducing the association of NR3C1/GR to glucocorticoid response elements (GREs) via the acetylation of multiple lysine residues located in its hinge region. The acetyltransferase activity of CLOCK is as important as its transcription activity in circadian control. Acetylates metabolic enzymes IMPDH2 and NDUFA9 in a circadian manner. Facilitated by BMAL1, rhythmically interacts and acetylates argininosuccinate synthase 1 (ASS1) leading to enzymatic inhibition of ASS1 as well as the circadian oscillation of arginine biosynthesis and subsequent ureagenesis (By similarity). Drives the circadian rhythm of blood pressure through transcriptional activation of ATP1B1 (By similarity).</text>
</comment>
<comment type="catalytic activity">
    <reaction>
        <text>L-lysyl-[protein] + acetyl-CoA = N(6)-acetyl-L-lysyl-[protein] + CoA + H(+)</text>
        <dbReference type="Rhea" id="RHEA:45948"/>
        <dbReference type="Rhea" id="RHEA-COMP:9752"/>
        <dbReference type="Rhea" id="RHEA-COMP:10731"/>
        <dbReference type="ChEBI" id="CHEBI:15378"/>
        <dbReference type="ChEBI" id="CHEBI:29969"/>
        <dbReference type="ChEBI" id="CHEBI:57287"/>
        <dbReference type="ChEBI" id="CHEBI:57288"/>
        <dbReference type="ChEBI" id="CHEBI:61930"/>
        <dbReference type="EC" id="2.3.1.48"/>
    </reaction>
</comment>
<comment type="subunit">
    <text evidence="2 3">Component of the circadian clock oscillator which includes the CRY proteins, CLOCK or NPAS2, BMAL1 or BMAL2, CSNK1D and/or CSNK1E, TIMELESS and the PER proteins (By similarity). Forms a heterodimer with BMAL1 (By similarity). The CLOCK-BMAL1 heterodimer is required for E-box-dependent transactivation, for CLOCK nuclear translocation and degradation, and for phosphorylation of both CLOCK and BMAL1 (By similarity). Interacts with NR3C1 in a ligand-dependent fashion (By similarity). Interacts with ESR1 and estrogen stimulates this interaction (By similarity). Interacts with the complex p35/CDK5 (By similarity). Interacts with RELA/p65 (By similarity). Interacts with KAT2B, CREBBP and EP300 (By similarity). Interacts with ID1 and ID3 (By similarity). Interacts with ID2 (By similarity). Interacts with MTA1 (By similarity). Interacts with OGA (By similarity). Interacts with SIRT1 (By similarity). Interacts with CIPC (By similarity). Interacts with EZH2 (By similarity). Interacts with EIF4E, PIWIL1 and DDX4 (By similarity). Interacts with PER1, PER2, CRY1 and CRY2 and this interaction requires a translocation to the nucleus (By similarity). Interaction of the CLOCK-BMAL1 heterodimer with PER or CRY inhibits transcription activation (By similarity). Interaction of the CLOCK-BMAL1 with CRY1 is independent of DNA but with PER2 is off DNA (By similarity). The CLOCK-BMAL1 heterodimer interacts with GSK3B (By similarity). Interacts with KDM5A (By similarity). Interacts with KMT2A; in a circadian manner (By similarity). Interacts with MYBBP1A (By similarity). Interacts with THRAP3 (By similarity). Interacts with MED1; this interaction requires the presence of THRAP3 (By similarity). Interacts with NCOA2 (By similarity). The CLOCK-BMAL1 heterodimer interacts with PASD1. Interacts with ASS1 and IMPDH2; in a circadian manner. Interacts with NDUFA9 (By similarity). Interacts with PIWIL2 (via PIWI domain) (By similarity). Interacts with HNF4A (By similarity).</text>
</comment>
<comment type="subcellular location">
    <subcellularLocation>
        <location evidence="2">Cytoplasm</location>
    </subcellularLocation>
    <subcellularLocation>
        <location evidence="5">Nucleus</location>
    </subcellularLocation>
    <subcellularLocation>
        <location evidence="3">Cytoplasm</location>
        <location evidence="3">Cytosol</location>
    </subcellularLocation>
    <text evidence="2">Localizes to sites of DNA damage in a H2AX-independent manner. Shuttling between the cytoplasm and the nucleus is under circadian regulation and is BMAL1-dependent. Sequestered to the cytoplasm in the presence of ID2.</text>
</comment>
<comment type="PTM">
    <text evidence="2">Ubiquitinated, leading to its proteasomal degradation.</text>
</comment>
<comment type="PTM">
    <text evidence="2">O-glycosylated; contains O-GlcNAc. O-glycosylation by OGT prevents protein degradation by inhibiting ubiquitination. It also stabilizes the CLOCK-BMAL1 heterodimer thereby increasing CLOCK-BMAL1-mediated transcriptional activation of PER1/2/3 and CRY1/2.</text>
</comment>
<comment type="PTM">
    <text evidence="2">Phosphorylation is dependent on the CLOCK-BMAL1 heterodimer formation. Phosphorylation enhances the transcriptional activity, alters the subcellular localization and decreases the stability of the heterodimer by promoting its degradation. Phosphorylation shows circadian variations in the liver. May be phosphorylated by CSNK1D and CKSN1E.</text>
</comment>
<comment type="PTM">
    <text evidence="2">Sumoylation enhances its transcriptional activity and interaction with ESR1, resulting in up-regulation of ESR1 activity. Estrogen stimulates sumoylation. Desumoylation by SENP1 negatively regulates its transcriptional activity.</text>
</comment>
<comment type="PTM">
    <text evidence="2">Undergoes lysosome-mediated degradation in a time-dependent manner in the liver.</text>
</comment>
<keyword id="KW-0010">Activator</keyword>
<keyword id="KW-0090">Biological rhythms</keyword>
<keyword id="KW-0963">Cytoplasm</keyword>
<keyword id="KW-0227">DNA damage</keyword>
<keyword id="KW-0238">DNA-binding</keyword>
<keyword id="KW-1017">Isopeptide bond</keyword>
<keyword id="KW-0539">Nucleus</keyword>
<keyword id="KW-0597">Phosphoprotein</keyword>
<keyword id="KW-0677">Repeat</keyword>
<keyword id="KW-0804">Transcription</keyword>
<keyword id="KW-0805">Transcription regulation</keyword>
<keyword id="KW-0808">Transferase</keyword>
<keyword id="KW-0832">Ubl conjugation</keyword>
<accession>Q91YA8</accession>
<evidence type="ECO:0000250" key="1"/>
<evidence type="ECO:0000250" key="2">
    <source>
        <dbReference type="UniProtKB" id="O08785"/>
    </source>
</evidence>
<evidence type="ECO:0000250" key="3">
    <source>
        <dbReference type="UniProtKB" id="O15516"/>
    </source>
</evidence>
<evidence type="ECO:0000255" key="4">
    <source>
        <dbReference type="PROSITE-ProRule" id="PRU00140"/>
    </source>
</evidence>
<evidence type="ECO:0000255" key="5">
    <source>
        <dbReference type="PROSITE-ProRule" id="PRU00981"/>
    </source>
</evidence>
<evidence type="ECO:0000256" key="6">
    <source>
        <dbReference type="SAM" id="MobiDB-lite"/>
    </source>
</evidence>
<sequence>MLFTVSCSKMSSIVDRDDSSIFDGLVEEDDKNKAKRVSRNKSEKKRRDQFNVLIKELGSMLPGNAREMDKSTVLQKSIDFLRKHKEITAQSDASEIRQDWKPTFLSNEEFTQLMLEALDGFFLAIMTDGSIIYVSESVTSLLEHLPSDLVDQSVFNFIPEGEHSEVYKILSTHLLESDSLTPEYLKSKNQLEFCCHMLRGTIDPKEPSTYEYMRFIGNFKSLNSVPTSAHNGFEGTIQRTHRLSYEDRVCSVATVRLATPQFIKEMCTVEEPNEEFTSRHSLEWKFLFLDHRAPPIIGYLPFEVLGTSGYDYYHVDDLENLAKCHEHLMQYGKGKSCYYRFLTKGQQWIWLQTHYYITYHQWNSRPEFIVCTHTVVSYAEVRAERRRELGIEESLPDATADKGQDSGSDNRINTVSLKEALERFDHSPTPSASSRSSRKSSHTAVSDPSSTPTKIPTDTSTPPRQHLPAHEKMAQRRSSFSSQSMNSQSVGPSLTQPVISQAANLPVPQGMSQFQFSAQLGAMQHLKDQLEQRTRMIEANIHRQQEELRKIQEQLQMVHGQGLQMFLQQSNPGLNFGSVQLSSGNSSNIQQLTPINMQGQVVPTNQIQSGMNAGHIGTSQHLIQQQSLQSTSTQQSQQSVMSGHSQQTSLASQTQSTLTAPLYNTMVISQPAPGSMVQIPSSMPQNSTQSATVTTFTQDRQIRFSQGQQLVTKLVTAPVACGAVMVPSTMLMGQVVTAYPTFATQQQQAQTLSVTQQQPQQQQPQQQQPQQQQPQQQQQSSQEQQLPSVPQPSQAQLTQSPQQFLQTSRLLHGNPSTQLILSAAFPLQQSTFPPSHHQQHQSQQQQQLSRHRTDSLTDPSKVQPQ</sequence>
<reference key="1">
    <citation type="journal article" date="2001" name="Proc. Natl. Acad. Sci. U.S.A.">
        <title>Biological clock in total darkness: the Clock/MOP3 circadian system of the blind subterranean mole rat.</title>
        <authorList>
            <person name="Avivi A."/>
            <person name="Albrecht U."/>
            <person name="Oster H."/>
            <person name="Joel A."/>
            <person name="Beiles A."/>
            <person name="Nevo E."/>
        </authorList>
    </citation>
    <scope>NUCLEOTIDE SEQUENCE [MRNA]</scope>
    <source>
        <tissue>Brain</tissue>
    </source>
</reference>
<dbReference type="EC" id="2.3.1.48"/>
<dbReference type="EMBL" id="AJ318059">
    <property type="protein sequence ID" value="CAC85405.1"/>
    <property type="molecule type" value="mRNA"/>
</dbReference>
<dbReference type="SMR" id="Q91YA8"/>
<dbReference type="GO" id="GO:0033391">
    <property type="term" value="C:chromatoid body"/>
    <property type="evidence" value="ECO:0000250"/>
    <property type="project" value="UniProtKB"/>
</dbReference>
<dbReference type="GO" id="GO:1990513">
    <property type="term" value="C:CLOCK-BMAL transcription complex"/>
    <property type="evidence" value="ECO:0007669"/>
    <property type="project" value="TreeGrafter"/>
</dbReference>
<dbReference type="GO" id="GO:0005829">
    <property type="term" value="C:cytosol"/>
    <property type="evidence" value="ECO:0000250"/>
    <property type="project" value="UniProtKB"/>
</dbReference>
<dbReference type="GO" id="GO:0005634">
    <property type="term" value="C:nucleus"/>
    <property type="evidence" value="ECO:0000250"/>
    <property type="project" value="UniProtKB"/>
</dbReference>
<dbReference type="GO" id="GO:0005667">
    <property type="term" value="C:transcription regulator complex"/>
    <property type="evidence" value="ECO:0000250"/>
    <property type="project" value="UniProtKB"/>
</dbReference>
<dbReference type="GO" id="GO:0031490">
    <property type="term" value="F:chromatin DNA binding"/>
    <property type="evidence" value="ECO:0000250"/>
    <property type="project" value="UniProtKB"/>
</dbReference>
<dbReference type="GO" id="GO:0003677">
    <property type="term" value="F:DNA binding"/>
    <property type="evidence" value="ECO:0000250"/>
    <property type="project" value="UniProtKB"/>
</dbReference>
<dbReference type="GO" id="GO:0003700">
    <property type="term" value="F:DNA-binding transcription factor activity"/>
    <property type="evidence" value="ECO:0000250"/>
    <property type="project" value="UniProtKB"/>
</dbReference>
<dbReference type="GO" id="GO:0000981">
    <property type="term" value="F:DNA-binding transcription factor activity, RNA polymerase II-specific"/>
    <property type="evidence" value="ECO:0007669"/>
    <property type="project" value="InterPro"/>
</dbReference>
<dbReference type="GO" id="GO:0070888">
    <property type="term" value="F:E-box binding"/>
    <property type="evidence" value="ECO:0000250"/>
    <property type="project" value="UniProtKB"/>
</dbReference>
<dbReference type="GO" id="GO:0004402">
    <property type="term" value="F:histone acetyltransferase activity"/>
    <property type="evidence" value="ECO:0000250"/>
    <property type="project" value="UniProtKB"/>
</dbReference>
<dbReference type="GO" id="GO:0046983">
    <property type="term" value="F:protein dimerization activity"/>
    <property type="evidence" value="ECO:0007669"/>
    <property type="project" value="InterPro"/>
</dbReference>
<dbReference type="GO" id="GO:0000978">
    <property type="term" value="F:RNA polymerase II cis-regulatory region sequence-specific DNA binding"/>
    <property type="evidence" value="ECO:0000250"/>
    <property type="project" value="UniProtKB"/>
</dbReference>
<dbReference type="GO" id="GO:0043565">
    <property type="term" value="F:sequence-specific DNA binding"/>
    <property type="evidence" value="ECO:0000250"/>
    <property type="project" value="UniProtKB"/>
</dbReference>
<dbReference type="GO" id="GO:0032922">
    <property type="term" value="P:circadian regulation of gene expression"/>
    <property type="evidence" value="ECO:0000250"/>
    <property type="project" value="UniProtKB"/>
</dbReference>
<dbReference type="GO" id="GO:0006974">
    <property type="term" value="P:DNA damage response"/>
    <property type="evidence" value="ECO:0007669"/>
    <property type="project" value="UniProtKB-KW"/>
</dbReference>
<dbReference type="GO" id="GO:0045892">
    <property type="term" value="P:negative regulation of DNA-templated transcription"/>
    <property type="evidence" value="ECO:0000250"/>
    <property type="project" value="UniProtKB"/>
</dbReference>
<dbReference type="GO" id="GO:2000323">
    <property type="term" value="P:negative regulation of nuclear receptor-mediated glucocorticoid signaling pathway"/>
    <property type="evidence" value="ECO:0000250"/>
    <property type="project" value="UniProtKB"/>
</dbReference>
<dbReference type="GO" id="GO:0045893">
    <property type="term" value="P:positive regulation of DNA-templated transcription"/>
    <property type="evidence" value="ECO:0000250"/>
    <property type="project" value="UniProtKB"/>
</dbReference>
<dbReference type="GO" id="GO:0051092">
    <property type="term" value="P:positive regulation of NF-kappaB transcription factor activity"/>
    <property type="evidence" value="ECO:0000250"/>
    <property type="project" value="UniProtKB"/>
</dbReference>
<dbReference type="GO" id="GO:0043161">
    <property type="term" value="P:proteasome-mediated ubiquitin-dependent protein catabolic process"/>
    <property type="evidence" value="ECO:0000250"/>
    <property type="project" value="UniProtKB"/>
</dbReference>
<dbReference type="GO" id="GO:0006473">
    <property type="term" value="P:protein acetylation"/>
    <property type="evidence" value="ECO:0000250"/>
    <property type="project" value="UniProtKB"/>
</dbReference>
<dbReference type="GO" id="GO:0042752">
    <property type="term" value="P:regulation of circadian rhythm"/>
    <property type="evidence" value="ECO:0000250"/>
    <property type="project" value="UniProtKB"/>
</dbReference>
<dbReference type="GO" id="GO:0006355">
    <property type="term" value="P:regulation of DNA-templated transcription"/>
    <property type="evidence" value="ECO:0000250"/>
    <property type="project" value="UniProtKB"/>
</dbReference>
<dbReference type="GO" id="GO:0042634">
    <property type="term" value="P:regulation of hair cycle"/>
    <property type="evidence" value="ECO:0000250"/>
    <property type="project" value="UniProtKB"/>
</dbReference>
<dbReference type="GO" id="GO:0050796">
    <property type="term" value="P:regulation of insulin secretion"/>
    <property type="evidence" value="ECO:0000250"/>
    <property type="project" value="UniProtKB"/>
</dbReference>
<dbReference type="GO" id="GO:2000074">
    <property type="term" value="P:regulation of type B pancreatic cell development"/>
    <property type="evidence" value="ECO:0000250"/>
    <property type="project" value="UniProtKB"/>
</dbReference>
<dbReference type="GO" id="GO:0051775">
    <property type="term" value="P:response to redox state"/>
    <property type="evidence" value="ECO:0000250"/>
    <property type="project" value="UniProtKB"/>
</dbReference>
<dbReference type="GO" id="GO:0007283">
    <property type="term" value="P:spermatogenesis"/>
    <property type="evidence" value="ECO:0000250"/>
    <property type="project" value="UniProtKB"/>
</dbReference>
<dbReference type="CDD" id="cd19734">
    <property type="entry name" value="bHLH-PAS_CLOCK"/>
    <property type="match status" value="1"/>
</dbReference>
<dbReference type="CDD" id="cd00130">
    <property type="entry name" value="PAS"/>
    <property type="match status" value="2"/>
</dbReference>
<dbReference type="FunFam" id="3.30.450.20:FF:000016">
    <property type="entry name" value="Circadian locomoter output cycles protein"/>
    <property type="match status" value="1"/>
</dbReference>
<dbReference type="FunFam" id="4.10.280.10:FF:000013">
    <property type="entry name" value="Circadian locomoter output cycles protein kaput"/>
    <property type="match status" value="1"/>
</dbReference>
<dbReference type="FunFam" id="3.30.450.20:FF:000022">
    <property type="entry name" value="circadian locomoter output cycles protein kaput"/>
    <property type="match status" value="1"/>
</dbReference>
<dbReference type="Gene3D" id="4.10.280.10">
    <property type="entry name" value="Helix-loop-helix DNA-binding domain"/>
    <property type="match status" value="1"/>
</dbReference>
<dbReference type="Gene3D" id="3.30.450.20">
    <property type="entry name" value="PAS domain"/>
    <property type="match status" value="2"/>
</dbReference>
<dbReference type="InterPro" id="IPR011598">
    <property type="entry name" value="bHLH_dom"/>
</dbReference>
<dbReference type="InterPro" id="IPR047230">
    <property type="entry name" value="CLOCK-like"/>
</dbReference>
<dbReference type="InterPro" id="IPR036638">
    <property type="entry name" value="HLH_DNA-bd_sf"/>
</dbReference>
<dbReference type="InterPro" id="IPR001067">
    <property type="entry name" value="Nuc_translocat"/>
</dbReference>
<dbReference type="InterPro" id="IPR001610">
    <property type="entry name" value="PAC"/>
</dbReference>
<dbReference type="InterPro" id="IPR000014">
    <property type="entry name" value="PAS"/>
</dbReference>
<dbReference type="InterPro" id="IPR035965">
    <property type="entry name" value="PAS-like_dom_sf"/>
</dbReference>
<dbReference type="InterPro" id="IPR013767">
    <property type="entry name" value="PAS_fold"/>
</dbReference>
<dbReference type="PANTHER" id="PTHR46055">
    <property type="entry name" value="CIRCADIAN LOCOMOTER OUTPUT CYCLES PROTEIN KAPUT"/>
    <property type="match status" value="1"/>
</dbReference>
<dbReference type="PANTHER" id="PTHR46055:SF2">
    <property type="entry name" value="CIRCADIAN LOCOMOTER OUTPUT CYCLES PROTEIN KAPUT"/>
    <property type="match status" value="1"/>
</dbReference>
<dbReference type="Pfam" id="PF00010">
    <property type="entry name" value="HLH"/>
    <property type="match status" value="1"/>
</dbReference>
<dbReference type="Pfam" id="PF00989">
    <property type="entry name" value="PAS"/>
    <property type="match status" value="1"/>
</dbReference>
<dbReference type="Pfam" id="PF14598">
    <property type="entry name" value="PAS_11"/>
    <property type="match status" value="1"/>
</dbReference>
<dbReference type="PRINTS" id="PR00785">
    <property type="entry name" value="NCTRNSLOCATR"/>
</dbReference>
<dbReference type="SMART" id="SM00353">
    <property type="entry name" value="HLH"/>
    <property type="match status" value="1"/>
</dbReference>
<dbReference type="SMART" id="SM00086">
    <property type="entry name" value="PAC"/>
    <property type="match status" value="1"/>
</dbReference>
<dbReference type="SMART" id="SM00091">
    <property type="entry name" value="PAS"/>
    <property type="match status" value="2"/>
</dbReference>
<dbReference type="SUPFAM" id="SSF47459">
    <property type="entry name" value="HLH, helix-loop-helix DNA-binding domain"/>
    <property type="match status" value="1"/>
</dbReference>
<dbReference type="SUPFAM" id="SSF55785">
    <property type="entry name" value="PYP-like sensor domain (PAS domain)"/>
    <property type="match status" value="2"/>
</dbReference>
<dbReference type="PROSITE" id="PS50888">
    <property type="entry name" value="BHLH"/>
    <property type="match status" value="1"/>
</dbReference>
<dbReference type="PROSITE" id="PS50112">
    <property type="entry name" value="PAS"/>
    <property type="match status" value="2"/>
</dbReference>